<dbReference type="EC" id="3.1.26.4" evidence="1"/>
<dbReference type="EMBL" id="BA000035">
    <property type="protein sequence ID" value="BAC18735.1"/>
    <property type="molecule type" value="Genomic_DNA"/>
</dbReference>
<dbReference type="RefSeq" id="WP_006767924.1">
    <property type="nucleotide sequence ID" value="NC_004369.1"/>
</dbReference>
<dbReference type="SMR" id="Q8FP63"/>
<dbReference type="STRING" id="196164.gene:10742353"/>
<dbReference type="KEGG" id="cef:CE1925"/>
<dbReference type="eggNOG" id="COG0164">
    <property type="taxonomic scope" value="Bacteria"/>
</dbReference>
<dbReference type="HOGENOM" id="CLU_036532_1_0_11"/>
<dbReference type="Proteomes" id="UP000001409">
    <property type="component" value="Chromosome"/>
</dbReference>
<dbReference type="GO" id="GO:0005737">
    <property type="term" value="C:cytoplasm"/>
    <property type="evidence" value="ECO:0007669"/>
    <property type="project" value="UniProtKB-SubCell"/>
</dbReference>
<dbReference type="GO" id="GO:0032299">
    <property type="term" value="C:ribonuclease H2 complex"/>
    <property type="evidence" value="ECO:0007669"/>
    <property type="project" value="TreeGrafter"/>
</dbReference>
<dbReference type="GO" id="GO:0030145">
    <property type="term" value="F:manganese ion binding"/>
    <property type="evidence" value="ECO:0007669"/>
    <property type="project" value="UniProtKB-UniRule"/>
</dbReference>
<dbReference type="GO" id="GO:0003723">
    <property type="term" value="F:RNA binding"/>
    <property type="evidence" value="ECO:0007669"/>
    <property type="project" value="InterPro"/>
</dbReference>
<dbReference type="GO" id="GO:0004523">
    <property type="term" value="F:RNA-DNA hybrid ribonuclease activity"/>
    <property type="evidence" value="ECO:0007669"/>
    <property type="project" value="UniProtKB-UniRule"/>
</dbReference>
<dbReference type="GO" id="GO:0043137">
    <property type="term" value="P:DNA replication, removal of RNA primer"/>
    <property type="evidence" value="ECO:0007669"/>
    <property type="project" value="TreeGrafter"/>
</dbReference>
<dbReference type="GO" id="GO:0006298">
    <property type="term" value="P:mismatch repair"/>
    <property type="evidence" value="ECO:0007669"/>
    <property type="project" value="TreeGrafter"/>
</dbReference>
<dbReference type="CDD" id="cd07182">
    <property type="entry name" value="RNase_HII_bacteria_HII_like"/>
    <property type="match status" value="1"/>
</dbReference>
<dbReference type="Gene3D" id="3.30.420.10">
    <property type="entry name" value="Ribonuclease H-like superfamily/Ribonuclease H"/>
    <property type="match status" value="1"/>
</dbReference>
<dbReference type="HAMAP" id="MF_00052_B">
    <property type="entry name" value="RNase_HII_B"/>
    <property type="match status" value="1"/>
</dbReference>
<dbReference type="InterPro" id="IPR022898">
    <property type="entry name" value="RNase_HII"/>
</dbReference>
<dbReference type="InterPro" id="IPR001352">
    <property type="entry name" value="RNase_HII/HIII"/>
</dbReference>
<dbReference type="InterPro" id="IPR024567">
    <property type="entry name" value="RNase_HII/HIII_dom"/>
</dbReference>
<dbReference type="InterPro" id="IPR012337">
    <property type="entry name" value="RNaseH-like_sf"/>
</dbReference>
<dbReference type="InterPro" id="IPR036397">
    <property type="entry name" value="RNaseH_sf"/>
</dbReference>
<dbReference type="NCBIfam" id="NF000595">
    <property type="entry name" value="PRK00015.1-3"/>
    <property type="match status" value="1"/>
</dbReference>
<dbReference type="NCBIfam" id="NF000598">
    <property type="entry name" value="PRK00015.2-2"/>
    <property type="match status" value="1"/>
</dbReference>
<dbReference type="PANTHER" id="PTHR10954">
    <property type="entry name" value="RIBONUCLEASE H2 SUBUNIT A"/>
    <property type="match status" value="1"/>
</dbReference>
<dbReference type="PANTHER" id="PTHR10954:SF18">
    <property type="entry name" value="RIBONUCLEASE HII"/>
    <property type="match status" value="1"/>
</dbReference>
<dbReference type="Pfam" id="PF01351">
    <property type="entry name" value="RNase_HII"/>
    <property type="match status" value="1"/>
</dbReference>
<dbReference type="SUPFAM" id="SSF53098">
    <property type="entry name" value="Ribonuclease H-like"/>
    <property type="match status" value="1"/>
</dbReference>
<dbReference type="PROSITE" id="PS51975">
    <property type="entry name" value="RNASE_H_2"/>
    <property type="match status" value="1"/>
</dbReference>
<comment type="function">
    <text evidence="1">Endonuclease that specifically degrades the RNA of RNA-DNA hybrids.</text>
</comment>
<comment type="catalytic activity">
    <reaction evidence="1">
        <text>Endonucleolytic cleavage to 5'-phosphomonoester.</text>
        <dbReference type="EC" id="3.1.26.4"/>
    </reaction>
</comment>
<comment type="cofactor">
    <cofactor evidence="1">
        <name>Mn(2+)</name>
        <dbReference type="ChEBI" id="CHEBI:29035"/>
    </cofactor>
    <cofactor evidence="1">
        <name>Mg(2+)</name>
        <dbReference type="ChEBI" id="CHEBI:18420"/>
    </cofactor>
    <text evidence="1">Manganese or magnesium. Binds 1 divalent metal ion per monomer in the absence of substrate. May bind a second metal ion after substrate binding.</text>
</comment>
<comment type="subcellular location">
    <subcellularLocation>
        <location evidence="1">Cytoplasm</location>
    </subcellularLocation>
</comment>
<comment type="similarity">
    <text evidence="1">Belongs to the RNase HII family.</text>
</comment>
<reference key="1">
    <citation type="journal article" date="2003" name="Genome Res.">
        <title>Comparative complete genome sequence analysis of the amino acid replacements responsible for the thermostability of Corynebacterium efficiens.</title>
        <authorList>
            <person name="Nishio Y."/>
            <person name="Nakamura Y."/>
            <person name="Kawarabayasi Y."/>
            <person name="Usuda Y."/>
            <person name="Kimura E."/>
            <person name="Sugimoto S."/>
            <person name="Matsui K."/>
            <person name="Yamagishi A."/>
            <person name="Kikuchi H."/>
            <person name="Ikeo K."/>
            <person name="Gojobori T."/>
        </authorList>
    </citation>
    <scope>NUCLEOTIDE SEQUENCE [LARGE SCALE GENOMIC DNA]</scope>
    <source>
        <strain>DSM 44549 / YS-314 / AJ 12310 / JCM 11189 / NBRC 100395</strain>
    </source>
</reference>
<proteinExistence type="inferred from homology"/>
<sequence>MATIRRLKQLRTYEVALSRHGLGPVAGVDEAGRGACCGPISIAACILPDRPIADLAVLTDSKQLSPPVRARLMPLVKKHAVAWSVIHISAADIDRFGIQHANISGMRRAVAALEVRPGYVLTDAFRIPGLPCPSLPIPGGDASARCIAAASVLAKQTRDEIMTDMAQQFPQYGLAGHKGYSTKVHMDAVRRHGASPQHRYSYANVAKAHREWALSHSDTEVQNTGKVEHER</sequence>
<evidence type="ECO:0000255" key="1">
    <source>
        <dbReference type="HAMAP-Rule" id="MF_00052"/>
    </source>
</evidence>
<evidence type="ECO:0000255" key="2">
    <source>
        <dbReference type="PROSITE-ProRule" id="PRU01319"/>
    </source>
</evidence>
<name>RNH2_COREF</name>
<organism>
    <name type="scientific">Corynebacterium efficiens (strain DSM 44549 / YS-314 / AJ 12310 / JCM 11189 / NBRC 100395)</name>
    <dbReference type="NCBI Taxonomy" id="196164"/>
    <lineage>
        <taxon>Bacteria</taxon>
        <taxon>Bacillati</taxon>
        <taxon>Actinomycetota</taxon>
        <taxon>Actinomycetes</taxon>
        <taxon>Mycobacteriales</taxon>
        <taxon>Corynebacteriaceae</taxon>
        <taxon>Corynebacterium</taxon>
    </lineage>
</organism>
<feature type="chain" id="PRO_0000111568" description="Ribonuclease HII">
    <location>
        <begin position="1"/>
        <end position="231"/>
    </location>
</feature>
<feature type="domain" description="RNase H type-2" evidence="2">
    <location>
        <begin position="23"/>
        <end position="214"/>
    </location>
</feature>
<feature type="binding site" evidence="1">
    <location>
        <position position="29"/>
    </location>
    <ligand>
        <name>a divalent metal cation</name>
        <dbReference type="ChEBI" id="CHEBI:60240"/>
    </ligand>
</feature>
<feature type="binding site" evidence="1">
    <location>
        <position position="30"/>
    </location>
    <ligand>
        <name>a divalent metal cation</name>
        <dbReference type="ChEBI" id="CHEBI:60240"/>
    </ligand>
</feature>
<feature type="binding site" evidence="1">
    <location>
        <position position="123"/>
    </location>
    <ligand>
        <name>a divalent metal cation</name>
        <dbReference type="ChEBI" id="CHEBI:60240"/>
    </ligand>
</feature>
<keyword id="KW-0963">Cytoplasm</keyword>
<keyword id="KW-0255">Endonuclease</keyword>
<keyword id="KW-0378">Hydrolase</keyword>
<keyword id="KW-0464">Manganese</keyword>
<keyword id="KW-0479">Metal-binding</keyword>
<keyword id="KW-0540">Nuclease</keyword>
<keyword id="KW-1185">Reference proteome</keyword>
<gene>
    <name evidence="1" type="primary">rnhB</name>
    <name type="ordered locus">CE1925</name>
</gene>
<protein>
    <recommendedName>
        <fullName evidence="1">Ribonuclease HII</fullName>
        <shortName evidence="1">RNase HII</shortName>
        <ecNumber evidence="1">3.1.26.4</ecNumber>
    </recommendedName>
</protein>
<accession>Q8FP63</accession>